<sequence>VHLTAEEKSLVSGLWGKVNVDEVGGEALGRLLIVYPWTQRFFDSFGDLSTPDAVMSNAKVKAHGKKVLNSFSDGLKNLDNLKGTFAKLSELHCDKLHVDPENFKLLGNVLVCVLAHHFGKEFTPQVQAAYQKVVAGVANALAHKYH</sequence>
<reference key="1">
    <citation type="journal article" date="1977" name="J. Mol. Evol.">
        <title>The amino acid sequence of dog (Canis familiaris) hemoglobin.</title>
        <authorList>
            <person name="Brimhall B."/>
            <person name="Duerst M."/>
            <person name="Jones R.T."/>
        </authorList>
    </citation>
    <scope>PROTEIN SEQUENCE</scope>
</reference>
<reference key="2">
    <citation type="journal article" date="2011" name="Acta Crystallogr. D">
        <title>Structure of Greyhound hemoglobin: origin of high oxygen affinity.</title>
        <authorList>
            <person name="Bhatt V.S."/>
            <person name="Zaldivar-Lopez S."/>
            <person name="Harris D.R."/>
            <person name="Couto C.G."/>
            <person name="Wang P.G."/>
            <person name="Palmer A.F."/>
        </authorList>
    </citation>
    <scope>X-RAY CRYSTALLOGRAPHY (1.9 ANGSTROMS)</scope>
    <scope>SUBUNIT</scope>
</reference>
<dbReference type="PIR" id="A02374">
    <property type="entry name" value="HBDG"/>
</dbReference>
<dbReference type="PDB" id="2QLS">
    <property type="method" value="X-ray"/>
    <property type="resolution" value="3.50 A"/>
    <property type="chains" value="B/D=1-146"/>
</dbReference>
<dbReference type="PDB" id="3GOU">
    <property type="method" value="X-ray"/>
    <property type="resolution" value="3.00 A"/>
    <property type="chains" value="B/D=1-146"/>
</dbReference>
<dbReference type="PDB" id="3PEL">
    <property type="method" value="X-ray"/>
    <property type="resolution" value="1.90 A"/>
    <property type="chains" value="B=1-146"/>
</dbReference>
<dbReference type="PDBsum" id="2QLS"/>
<dbReference type="PDBsum" id="3GOU"/>
<dbReference type="PDBsum" id="3PEL"/>
<dbReference type="SMR" id="P60524"/>
<dbReference type="FunCoup" id="P60524">
    <property type="interactions" value="7"/>
</dbReference>
<dbReference type="STRING" id="9615.ENSCAFP00000063042"/>
<dbReference type="PaxDb" id="9612-ENSCAFP00000009258"/>
<dbReference type="eggNOG" id="KOG3378">
    <property type="taxonomic scope" value="Eukaryota"/>
</dbReference>
<dbReference type="InParanoid" id="P60524"/>
<dbReference type="OrthoDB" id="9886081at2759"/>
<dbReference type="EvolutionaryTrace" id="P60524"/>
<dbReference type="Proteomes" id="UP000002254">
    <property type="component" value="Unplaced"/>
</dbReference>
<dbReference type="Proteomes" id="UP000694429">
    <property type="component" value="Unplaced"/>
</dbReference>
<dbReference type="Proteomes" id="UP000694542">
    <property type="component" value="Unplaced"/>
</dbReference>
<dbReference type="Proteomes" id="UP000805418">
    <property type="component" value="Unplaced"/>
</dbReference>
<dbReference type="GO" id="GO:0031838">
    <property type="term" value="C:haptoglobin-hemoglobin complex"/>
    <property type="evidence" value="ECO:0000318"/>
    <property type="project" value="GO_Central"/>
</dbReference>
<dbReference type="GO" id="GO:0005833">
    <property type="term" value="C:hemoglobin complex"/>
    <property type="evidence" value="ECO:0000318"/>
    <property type="project" value="GO_Central"/>
</dbReference>
<dbReference type="GO" id="GO:0020037">
    <property type="term" value="F:heme binding"/>
    <property type="evidence" value="ECO:0000318"/>
    <property type="project" value="GO_Central"/>
</dbReference>
<dbReference type="GO" id="GO:0031721">
    <property type="term" value="F:hemoglobin alpha binding"/>
    <property type="evidence" value="ECO:0000318"/>
    <property type="project" value="GO_Central"/>
</dbReference>
<dbReference type="GO" id="GO:0046872">
    <property type="term" value="F:metal ion binding"/>
    <property type="evidence" value="ECO:0007669"/>
    <property type="project" value="UniProtKB-KW"/>
</dbReference>
<dbReference type="GO" id="GO:0019825">
    <property type="term" value="F:oxygen binding"/>
    <property type="evidence" value="ECO:0000318"/>
    <property type="project" value="GO_Central"/>
</dbReference>
<dbReference type="GO" id="GO:0005344">
    <property type="term" value="F:oxygen carrier activity"/>
    <property type="evidence" value="ECO:0000318"/>
    <property type="project" value="GO_Central"/>
</dbReference>
<dbReference type="GO" id="GO:0098869">
    <property type="term" value="P:cellular oxidant detoxification"/>
    <property type="evidence" value="ECO:0007669"/>
    <property type="project" value="GOC"/>
</dbReference>
<dbReference type="GO" id="GO:0042744">
    <property type="term" value="P:hydrogen peroxide catabolic process"/>
    <property type="evidence" value="ECO:0000318"/>
    <property type="project" value="GO_Central"/>
</dbReference>
<dbReference type="CDD" id="cd08925">
    <property type="entry name" value="Hb-beta-like"/>
    <property type="match status" value="1"/>
</dbReference>
<dbReference type="FunFam" id="1.10.490.10:FF:000001">
    <property type="entry name" value="Hemoglobin subunit beta"/>
    <property type="match status" value="1"/>
</dbReference>
<dbReference type="Gene3D" id="1.10.490.10">
    <property type="entry name" value="Globins"/>
    <property type="match status" value="1"/>
</dbReference>
<dbReference type="InterPro" id="IPR000971">
    <property type="entry name" value="Globin"/>
</dbReference>
<dbReference type="InterPro" id="IPR009050">
    <property type="entry name" value="Globin-like_sf"/>
</dbReference>
<dbReference type="InterPro" id="IPR012292">
    <property type="entry name" value="Globin/Proto"/>
</dbReference>
<dbReference type="InterPro" id="IPR002337">
    <property type="entry name" value="Hemoglobin_b"/>
</dbReference>
<dbReference type="InterPro" id="IPR050056">
    <property type="entry name" value="Hemoglobin_oxygen_transport"/>
</dbReference>
<dbReference type="PANTHER" id="PTHR11442">
    <property type="entry name" value="HEMOGLOBIN FAMILY MEMBER"/>
    <property type="match status" value="1"/>
</dbReference>
<dbReference type="PANTHER" id="PTHR11442:SF42">
    <property type="entry name" value="HEMOGLOBIN SUBUNIT BETA"/>
    <property type="match status" value="1"/>
</dbReference>
<dbReference type="Pfam" id="PF00042">
    <property type="entry name" value="Globin"/>
    <property type="match status" value="1"/>
</dbReference>
<dbReference type="PRINTS" id="PR00814">
    <property type="entry name" value="BETAHAEM"/>
</dbReference>
<dbReference type="SUPFAM" id="SSF46458">
    <property type="entry name" value="Globin-like"/>
    <property type="match status" value="1"/>
</dbReference>
<dbReference type="PROSITE" id="PS01033">
    <property type="entry name" value="GLOBIN"/>
    <property type="match status" value="1"/>
</dbReference>
<keyword id="KW-0002">3D-structure</keyword>
<keyword id="KW-0007">Acetylation</keyword>
<keyword id="KW-0903">Direct protein sequencing</keyword>
<keyword id="KW-0349">Heme</keyword>
<keyword id="KW-0408">Iron</keyword>
<keyword id="KW-0479">Metal-binding</keyword>
<keyword id="KW-0561">Oxygen transport</keyword>
<keyword id="KW-0597">Phosphoprotein</keyword>
<keyword id="KW-1185">Reference proteome</keyword>
<keyword id="KW-0702">S-nitrosylation</keyword>
<keyword id="KW-0813">Transport</keyword>
<feature type="chain" id="PRO_0000052907" description="Hemoglobin subunit beta">
    <location>
        <begin position="1"/>
        <end position="146"/>
    </location>
</feature>
<feature type="domain" description="Globin" evidence="3">
    <location>
        <begin position="2"/>
        <end position="146"/>
    </location>
</feature>
<feature type="binding site" description="distal binding residue">
    <location>
        <position position="63"/>
    </location>
    <ligand>
        <name>heme b</name>
        <dbReference type="ChEBI" id="CHEBI:60344"/>
    </ligand>
    <ligandPart>
        <name>Fe</name>
        <dbReference type="ChEBI" id="CHEBI:18248"/>
    </ligandPart>
</feature>
<feature type="binding site" description="proximal binding residue">
    <location>
        <position position="92"/>
    </location>
    <ligand>
        <name>heme b</name>
        <dbReference type="ChEBI" id="CHEBI:60344"/>
    </ligand>
    <ligandPart>
        <name>Fe</name>
        <dbReference type="ChEBI" id="CHEBI:18248"/>
    </ligandPart>
</feature>
<feature type="modified residue" description="N-acetylvaline" evidence="1">
    <location>
        <position position="1"/>
    </location>
</feature>
<feature type="modified residue" description="Phosphoserine" evidence="2">
    <location>
        <position position="44"/>
    </location>
</feature>
<feature type="modified residue" description="N6-acetyllysine" evidence="2">
    <location>
        <position position="59"/>
    </location>
</feature>
<feature type="modified residue" description="N6-acetyllysine" evidence="2">
    <location>
        <position position="82"/>
    </location>
</feature>
<feature type="modified residue" description="S-nitrosocysteine" evidence="2">
    <location>
        <position position="93"/>
    </location>
</feature>
<feature type="modified residue" description="N6-acetyllysine" evidence="2">
    <location>
        <position position="144"/>
    </location>
</feature>
<feature type="helix" evidence="5">
    <location>
        <begin position="5"/>
        <end position="15"/>
    </location>
</feature>
<feature type="turn" evidence="5">
    <location>
        <begin position="20"/>
        <end position="22"/>
    </location>
</feature>
<feature type="helix" evidence="5">
    <location>
        <begin position="23"/>
        <end position="34"/>
    </location>
</feature>
<feature type="helix" evidence="5">
    <location>
        <begin position="36"/>
        <end position="45"/>
    </location>
</feature>
<feature type="helix" evidence="5">
    <location>
        <begin position="51"/>
        <end position="55"/>
    </location>
</feature>
<feature type="helix" evidence="5">
    <location>
        <begin position="58"/>
        <end position="75"/>
    </location>
</feature>
<feature type="helix" evidence="5">
    <location>
        <begin position="78"/>
        <end position="80"/>
    </location>
</feature>
<feature type="helix" evidence="5">
    <location>
        <begin position="81"/>
        <end position="94"/>
    </location>
</feature>
<feature type="helix" evidence="5">
    <location>
        <begin position="101"/>
        <end position="118"/>
    </location>
</feature>
<feature type="helix" evidence="5">
    <location>
        <begin position="119"/>
        <end position="121"/>
    </location>
</feature>
<feature type="helix" evidence="5">
    <location>
        <begin position="124"/>
        <end position="141"/>
    </location>
</feature>
<feature type="helix" evidence="5">
    <location>
        <begin position="143"/>
        <end position="145"/>
    </location>
</feature>
<organism>
    <name type="scientific">Canis lupus familiaris</name>
    <name type="common">Dog</name>
    <name type="synonym">Canis familiaris</name>
    <dbReference type="NCBI Taxonomy" id="9615"/>
    <lineage>
        <taxon>Eukaryota</taxon>
        <taxon>Metazoa</taxon>
        <taxon>Chordata</taxon>
        <taxon>Craniata</taxon>
        <taxon>Vertebrata</taxon>
        <taxon>Euteleostomi</taxon>
        <taxon>Mammalia</taxon>
        <taxon>Eutheria</taxon>
        <taxon>Laurasiatheria</taxon>
        <taxon>Carnivora</taxon>
        <taxon>Caniformia</taxon>
        <taxon>Canidae</taxon>
        <taxon>Canis</taxon>
    </lineage>
</organism>
<evidence type="ECO:0000250" key="1">
    <source>
        <dbReference type="UniProtKB" id="P02086"/>
    </source>
</evidence>
<evidence type="ECO:0000250" key="2">
    <source>
        <dbReference type="UniProtKB" id="P68871"/>
    </source>
</evidence>
<evidence type="ECO:0000255" key="3">
    <source>
        <dbReference type="PROSITE-ProRule" id="PRU00238"/>
    </source>
</evidence>
<evidence type="ECO:0000269" key="4">
    <source>
    </source>
</evidence>
<evidence type="ECO:0007829" key="5">
    <source>
        <dbReference type="PDB" id="3PEL"/>
    </source>
</evidence>
<comment type="function">
    <text>Involved in oxygen transport from the lung to the various peripheral tissues.</text>
</comment>
<comment type="subunit">
    <text evidence="4">Heterotetramer of two alpha chains and two beta chains.</text>
</comment>
<comment type="tissue specificity">
    <text>Red blood cells.</text>
</comment>
<comment type="similarity">
    <text evidence="3">Belongs to the globin family.</text>
</comment>
<proteinExistence type="evidence at protein level"/>
<name>HBB_CANLF</name>
<protein>
    <recommendedName>
        <fullName>Hemoglobin subunit beta</fullName>
    </recommendedName>
    <alternativeName>
        <fullName>Beta-globin</fullName>
    </alternativeName>
    <alternativeName>
        <fullName>Hemoglobin beta chain</fullName>
    </alternativeName>
</protein>
<gene>
    <name type="primary">HBB</name>
</gene>
<accession>P60524</accession>
<accession>P02056</accession>